<accession>Q32KS0</accession>
<accession>Q0V8R2</accession>
<proteinExistence type="evidence at transcript level"/>
<gene>
    <name type="primary">TBCE</name>
</gene>
<protein>
    <recommendedName>
        <fullName>Tubulin-specific chaperone E</fullName>
    </recommendedName>
    <alternativeName>
        <fullName>Tubulin-folding cofactor E</fullName>
    </alternativeName>
</protein>
<name>TBCE_BOVIN</name>
<evidence type="ECO:0000250" key="1"/>
<evidence type="ECO:0000250" key="2">
    <source>
        <dbReference type="UniProtKB" id="Q15813"/>
    </source>
</evidence>
<evidence type="ECO:0000250" key="3">
    <source>
        <dbReference type="UniProtKB" id="Q8CIV8"/>
    </source>
</evidence>
<evidence type="ECO:0000255" key="4">
    <source>
        <dbReference type="PROSITE-ProRule" id="PRU00045"/>
    </source>
</evidence>
<evidence type="ECO:0000305" key="5"/>
<sequence>MNSTSTSDVIGRRVEVNGEHATVRFSGLVPPVAGLWLGVEWDNPERGKHDGSHEGTVYFKCRHPTAGSFIRPHKVNFGVDFLTAIKNRYVLEDEPKEEETEQIVIIGNKPVETIGFDSVIKQQSQLSKLQDVSLRNCAVNGAGDKGEIAKACPNIRSIDLSKNLLSSWEEVIDIADQLKHLEVLNLSENKLTSPSSSPSPTGTFPTLKVLVLNRTGVTWAEVLRCASGWPVLEKLYLESNNIIISERPTDVLQTVKLLDLSSNQLIDENQLFLIAYLPRLEQLILSDIGISSIHFPDAGIGCKTSMFPSLQYLVLNDNQIAQWSFMNELDKLQSLHALSCTRNPLTEGSKDAQTTRQFIIARIGQLRTLNKCAIEPEERRGAELDYRKAFGNEWKKAGGHQDPEKNRPNEEFLAAHPRYQALCLKYGAPEDGELKTQQPFLLKNQLLTLKIKYPNQHDQKVIEKQLPDSMTVQKVKGLLSRLLKVPVSELLLSYESPKMPGKEVELENDLQPLRFYSVENGDCLLVRW</sequence>
<reference key="1">
    <citation type="journal article" date="2005" name="BMC Genomics">
        <title>Characterization of 954 bovine full-CDS cDNA sequences.</title>
        <authorList>
            <person name="Harhay G.P."/>
            <person name="Sonstegard T.S."/>
            <person name="Keele J.W."/>
            <person name="Heaton M.P."/>
            <person name="Clawson M.L."/>
            <person name="Snelling W.M."/>
            <person name="Wiedmann R.T."/>
            <person name="Van Tassell C.P."/>
            <person name="Smith T.P.L."/>
        </authorList>
    </citation>
    <scope>NUCLEOTIDE SEQUENCE [LARGE SCALE MRNA]</scope>
</reference>
<reference key="2">
    <citation type="submission" date="2005-11" db="EMBL/GenBank/DDBJ databases">
        <authorList>
            <consortium name="NIH - Mammalian Gene Collection (MGC) project"/>
        </authorList>
    </citation>
    <scope>NUCLEOTIDE SEQUENCE [LARGE SCALE MRNA]</scope>
    <source>
        <strain>Crossbred X Angus</strain>
        <tissue>Liver</tissue>
    </source>
</reference>
<keyword id="KW-0007">Acetylation</keyword>
<keyword id="KW-0143">Chaperone</keyword>
<keyword id="KW-0963">Cytoplasm</keyword>
<keyword id="KW-0206">Cytoskeleton</keyword>
<keyword id="KW-0433">Leucine-rich repeat</keyword>
<keyword id="KW-0597">Phosphoprotein</keyword>
<keyword id="KW-1185">Reference proteome</keyword>
<keyword id="KW-0677">Repeat</keyword>
<organism>
    <name type="scientific">Bos taurus</name>
    <name type="common">Bovine</name>
    <dbReference type="NCBI Taxonomy" id="9913"/>
    <lineage>
        <taxon>Eukaryota</taxon>
        <taxon>Metazoa</taxon>
        <taxon>Chordata</taxon>
        <taxon>Craniata</taxon>
        <taxon>Vertebrata</taxon>
        <taxon>Euteleostomi</taxon>
        <taxon>Mammalia</taxon>
        <taxon>Eutheria</taxon>
        <taxon>Laurasiatheria</taxon>
        <taxon>Artiodactyla</taxon>
        <taxon>Ruminantia</taxon>
        <taxon>Pecora</taxon>
        <taxon>Bovidae</taxon>
        <taxon>Bovinae</taxon>
        <taxon>Bos</taxon>
    </lineage>
</organism>
<comment type="function">
    <text evidence="2">Tubulin-folding protein; involved in the second step of the tubulin folding pathway and in the regulation of tubulin heterodimer dissociation. Required for correct organization of microtubule cytoskeleton and mitotic splindle, and maintenance of the neuronal microtubule network.</text>
</comment>
<comment type="subunit">
    <text evidence="2 3">Supercomplex made of cofactors A to E. Cofactors A and D function by capturing and stabilizing tubulin in a quasi-native conformation. Cofactor E binds to the cofactor D-tubulin complex; interaction with cofactor C then causes the release of tubulin polypeptides that are committed to the native state. Cofactors B and E can form a heterodimer which binds to alpha-tubulin and enhances their ability to dissociate tubulin heterodimers (By similarity). Interacts with TBCD (By similarity).</text>
</comment>
<comment type="subcellular location">
    <subcellularLocation>
        <location evidence="1">Cytoplasm</location>
    </subcellularLocation>
    <subcellularLocation>
        <location evidence="1">Cytoplasm</location>
        <location evidence="1">Cytoskeleton</location>
    </subcellularLocation>
</comment>
<comment type="similarity">
    <text evidence="5">Belongs to the TBCE family.</text>
</comment>
<feature type="chain" id="PRO_0000083537" description="Tubulin-specific chaperone E">
    <location>
        <begin position="1"/>
        <end position="528"/>
    </location>
</feature>
<feature type="domain" description="CAP-Gly" evidence="4">
    <location>
        <begin position="27"/>
        <end position="71"/>
    </location>
</feature>
<feature type="repeat" description="LRR 1">
    <location>
        <begin position="152"/>
        <end position="176"/>
    </location>
</feature>
<feature type="repeat" description="LRR 2">
    <location>
        <begin position="178"/>
        <end position="206"/>
    </location>
</feature>
<feature type="repeat" description="LRR 3">
    <location>
        <begin position="207"/>
        <end position="229"/>
    </location>
</feature>
<feature type="repeat" description="LRR 4">
    <location>
        <begin position="231"/>
        <end position="253"/>
    </location>
</feature>
<feature type="repeat" description="LRR 5">
    <location>
        <begin position="254"/>
        <end position="274"/>
    </location>
</feature>
<feature type="repeat" description="LRR 6">
    <location>
        <begin position="279"/>
        <end position="300"/>
    </location>
</feature>
<feature type="repeat" description="LRR 7">
    <location>
        <begin position="309"/>
        <end position="330"/>
    </location>
</feature>
<feature type="domain" description="LRRCT">
    <location>
        <begin position="343"/>
        <end position="385"/>
    </location>
</feature>
<feature type="modified residue" description="N6-acetyllysine" evidence="2">
    <location>
        <position position="464"/>
    </location>
</feature>
<feature type="modified residue" description="Phosphoserine" evidence="2">
    <location>
        <position position="496"/>
    </location>
</feature>
<feature type="sequence conflict" description="In Ref. 1; ABG66995." evidence="5" ref="1">
    <original>I</original>
    <variation>V</variation>
    <location>
        <position position="243"/>
    </location>
</feature>
<dbReference type="EMBL" id="BT026156">
    <property type="protein sequence ID" value="ABG66995.1"/>
    <property type="molecule type" value="mRNA"/>
</dbReference>
<dbReference type="EMBL" id="BC109955">
    <property type="protein sequence ID" value="AAI09956.1"/>
    <property type="molecule type" value="mRNA"/>
</dbReference>
<dbReference type="RefSeq" id="NP_001033121.1">
    <property type="nucleotide sequence ID" value="NM_001038032.2"/>
</dbReference>
<dbReference type="RefSeq" id="XP_005226263.1">
    <property type="nucleotide sequence ID" value="XM_005226206.5"/>
</dbReference>
<dbReference type="RefSeq" id="XP_015316413.1">
    <property type="nucleotide sequence ID" value="XM_015460927.3"/>
</dbReference>
<dbReference type="SMR" id="Q32KS0"/>
<dbReference type="FunCoup" id="Q32KS0">
    <property type="interactions" value="4310"/>
</dbReference>
<dbReference type="STRING" id="9913.ENSBTAP00000018249"/>
<dbReference type="PaxDb" id="9913-ENSBTAP00000018249"/>
<dbReference type="GeneID" id="505066"/>
<dbReference type="KEGG" id="bta:505066"/>
<dbReference type="CTD" id="6905"/>
<dbReference type="VEuPathDB" id="HostDB:ENSBTAG00000013735"/>
<dbReference type="eggNOG" id="KOG3207">
    <property type="taxonomic scope" value="Eukaryota"/>
</dbReference>
<dbReference type="HOGENOM" id="CLU_017716_5_0_1"/>
<dbReference type="InParanoid" id="Q32KS0"/>
<dbReference type="OMA" id="SEESHMF"/>
<dbReference type="OrthoDB" id="5273213at2759"/>
<dbReference type="TreeFam" id="TF313455"/>
<dbReference type="Proteomes" id="UP000009136">
    <property type="component" value="Chromosome 28"/>
</dbReference>
<dbReference type="Bgee" id="ENSBTAG00000013735">
    <property type="expression patterns" value="Expressed in oocyte and 106 other cell types or tissues"/>
</dbReference>
<dbReference type="GO" id="GO:0005737">
    <property type="term" value="C:cytoplasm"/>
    <property type="evidence" value="ECO:0000318"/>
    <property type="project" value="GO_Central"/>
</dbReference>
<dbReference type="GO" id="GO:0005856">
    <property type="term" value="C:cytoskeleton"/>
    <property type="evidence" value="ECO:0007669"/>
    <property type="project" value="UniProtKB-SubCell"/>
</dbReference>
<dbReference type="GO" id="GO:0005829">
    <property type="term" value="C:cytosol"/>
    <property type="evidence" value="ECO:0000304"/>
    <property type="project" value="Reactome"/>
</dbReference>
<dbReference type="GO" id="GO:0043014">
    <property type="term" value="F:alpha-tubulin binding"/>
    <property type="evidence" value="ECO:0000318"/>
    <property type="project" value="GO_Central"/>
</dbReference>
<dbReference type="GO" id="GO:0000226">
    <property type="term" value="P:microtubule cytoskeleton organization"/>
    <property type="evidence" value="ECO:0000250"/>
    <property type="project" value="UniProtKB"/>
</dbReference>
<dbReference type="GO" id="GO:0007052">
    <property type="term" value="P:mitotic spindle organization"/>
    <property type="evidence" value="ECO:0000250"/>
    <property type="project" value="UniProtKB"/>
</dbReference>
<dbReference type="GO" id="GO:0007023">
    <property type="term" value="P:post-chaperonin tubulin folding pathway"/>
    <property type="evidence" value="ECO:0000318"/>
    <property type="project" value="GO_Central"/>
</dbReference>
<dbReference type="GO" id="GO:0007021">
    <property type="term" value="P:tubulin complex assembly"/>
    <property type="evidence" value="ECO:0000318"/>
    <property type="project" value="GO_Central"/>
</dbReference>
<dbReference type="CDD" id="cd17044">
    <property type="entry name" value="Ubl_TBCE"/>
    <property type="match status" value="1"/>
</dbReference>
<dbReference type="FunFam" id="2.30.30.190:FF:000008">
    <property type="entry name" value="Tubulin-specific chaperone E"/>
    <property type="match status" value="1"/>
</dbReference>
<dbReference type="FunFam" id="3.10.20.90:FF:000173">
    <property type="entry name" value="Tubulin-specific chaperone E"/>
    <property type="match status" value="1"/>
</dbReference>
<dbReference type="FunFam" id="3.80.10.10:FF:000268">
    <property type="entry name" value="Tubulin-specific chaperone E"/>
    <property type="match status" value="1"/>
</dbReference>
<dbReference type="FunFam" id="3.80.10.10:FF:000593">
    <property type="entry name" value="Tubulin-specific chaperone E"/>
    <property type="match status" value="1"/>
</dbReference>
<dbReference type="Gene3D" id="2.30.30.190">
    <property type="entry name" value="CAP Gly-rich-like domain"/>
    <property type="match status" value="1"/>
</dbReference>
<dbReference type="Gene3D" id="3.10.20.90">
    <property type="entry name" value="Phosphatidylinositol 3-kinase Catalytic Subunit, Chain A, domain 1"/>
    <property type="match status" value="1"/>
</dbReference>
<dbReference type="Gene3D" id="3.80.10.10">
    <property type="entry name" value="Ribonuclease Inhibitor"/>
    <property type="match status" value="2"/>
</dbReference>
<dbReference type="InterPro" id="IPR036859">
    <property type="entry name" value="CAP-Gly_dom_sf"/>
</dbReference>
<dbReference type="InterPro" id="IPR000938">
    <property type="entry name" value="CAP-Gly_domain"/>
</dbReference>
<dbReference type="InterPro" id="IPR001611">
    <property type="entry name" value="Leu-rich_rpt"/>
</dbReference>
<dbReference type="InterPro" id="IPR032675">
    <property type="entry name" value="LRR_dom_sf"/>
</dbReference>
<dbReference type="InterPro" id="IPR000626">
    <property type="entry name" value="Ubiquitin-like_dom"/>
</dbReference>
<dbReference type="InterPro" id="IPR029071">
    <property type="entry name" value="Ubiquitin-like_domsf"/>
</dbReference>
<dbReference type="InterPro" id="IPR044079">
    <property type="entry name" value="Ubl_TBCE"/>
</dbReference>
<dbReference type="PANTHER" id="PTHR18849:SF0">
    <property type="entry name" value="CILIA- AND FLAGELLA-ASSOCIATED PROTEIN 410-RELATED"/>
    <property type="match status" value="1"/>
</dbReference>
<dbReference type="PANTHER" id="PTHR18849">
    <property type="entry name" value="LEUCINE RICH REPEAT PROTEIN"/>
    <property type="match status" value="1"/>
</dbReference>
<dbReference type="Pfam" id="PF01302">
    <property type="entry name" value="CAP_GLY"/>
    <property type="match status" value="1"/>
</dbReference>
<dbReference type="Pfam" id="PF00560">
    <property type="entry name" value="LRR_1"/>
    <property type="match status" value="1"/>
</dbReference>
<dbReference type="Pfam" id="PF14580">
    <property type="entry name" value="LRR_9"/>
    <property type="match status" value="1"/>
</dbReference>
<dbReference type="Pfam" id="PF14560">
    <property type="entry name" value="Ubiquitin_2"/>
    <property type="match status" value="1"/>
</dbReference>
<dbReference type="SMART" id="SM01052">
    <property type="entry name" value="CAP_GLY"/>
    <property type="match status" value="1"/>
</dbReference>
<dbReference type="SUPFAM" id="SSF74924">
    <property type="entry name" value="Cap-Gly domain"/>
    <property type="match status" value="1"/>
</dbReference>
<dbReference type="SUPFAM" id="SSF52047">
    <property type="entry name" value="RNI-like"/>
    <property type="match status" value="1"/>
</dbReference>
<dbReference type="SUPFAM" id="SSF54236">
    <property type="entry name" value="Ubiquitin-like"/>
    <property type="match status" value="1"/>
</dbReference>
<dbReference type="PROSITE" id="PS00845">
    <property type="entry name" value="CAP_GLY_1"/>
    <property type="match status" value="1"/>
</dbReference>
<dbReference type="PROSITE" id="PS50245">
    <property type="entry name" value="CAP_GLY_2"/>
    <property type="match status" value="1"/>
</dbReference>
<dbReference type="PROSITE" id="PS51450">
    <property type="entry name" value="LRR"/>
    <property type="match status" value="5"/>
</dbReference>